<accession>Q9R1V6</accession>
<accession>Q5TLI8</accession>
<accession>Q5TLI9</accession>
<accession>Q5TLJ0</accession>
<accession>Q5TLJ1</accession>
<accession>Q5TLJ2</accession>
<accession>Q5TLJ3</accession>
<accession>Q5TLJ4</accession>
<accession>Q5TLJ5</accession>
<accession>Q5TLJ6</accession>
<accession>Q5TLJ7</accession>
<accession>Q5TLJ8</accession>
<accession>Q5TLJ9</accession>
<accession>Q5TLK0</accession>
<accession>Q5TLK1</accession>
<accession>Q5TLK2</accession>
<accession>Q5TLK3</accession>
<accession>Q5TLK4</accession>
<accession>Q5TLK5</accession>
<accession>Q5TLK6</accession>
<accession>Q5TLK7</accession>
<accession>Q5TLK8</accession>
<accession>Q8BSF2</accession>
<accession>Q9R1V5</accession>
<proteinExistence type="evidence at protein level"/>
<comment type="function">
    <text evidence="2 9">Probable ligand for integrin in the brain. This is a non catalytic metalloprotease-like protein. Involved in regulation of cell adhesion and spreading and in inhibition of cell proliferation (By similarity). Neuronal receptor for LGI1.</text>
</comment>
<comment type="subunit">
    <text evidence="2 9 10 11 12">Interacts with LGI1 (PubMed:16990550, PubMed:18974846, PubMed:20089912). Can bind to LGI4 (PubMed:18974846). Interacts with KCNA2, DLG2 and DLG4 (PubMed:20089912). Interacts with ADAM11 (PubMed:26269648). Interacts (via C-terminus) with YWHAB/14-3-3 beta (By similarity). Interacts (via C-terminus) with YWHAZ/14-3-3 zeta (By similarity).</text>
</comment>
<comment type="subcellular location">
    <subcellularLocation>
        <location evidence="11">Cell membrane</location>
        <topology evidence="16">Single-pass type I membrane protein</topology>
    </subcellularLocation>
    <subcellularLocation>
        <location evidence="11">Cell projection</location>
        <location evidence="11">Axon</location>
    </subcellularLocation>
</comment>
<comment type="alternative products">
    <event type="alternative splicing"/>
    <isoform>
        <id>Q9R1V6-3</id>
        <name>1</name>
        <name>ADAM22-G01</name>
        <name>22g</name>
        <sequence type="displayed"/>
    </isoform>
    <isoform>
        <id>Q9R1V6-4</id>
        <name>2</name>
        <name>ADAM22-G03</name>
        <name>22g(D27)</name>
        <sequence type="described" ref="VSP_018238"/>
    </isoform>
    <isoform>
        <id>Q9R1V6-5</id>
        <name>3</name>
        <name>ADAM22-G06</name>
        <name>22g(D26D27)</name>
        <sequence type="described" ref="VSP_018235"/>
    </isoform>
    <isoform>
        <id>Q9R1V6-6</id>
        <name>4</name>
        <name>ADAM22=G07</name>
        <name>22g(D26D27)+29.3</name>
        <sequence type="described" ref="VSP_018235 VSP_018245"/>
    </isoform>
    <isoform>
        <id>Q9R1V6-7</id>
        <name>5</name>
        <name>ADAM22-G08</name>
        <name>22g(D27)+29.3</name>
        <sequence type="described" ref="VSP_018238 VSP_018245"/>
    </isoform>
    <isoform>
        <id>Q9R1V6-8</id>
        <name>6</name>
        <name>ADAM22-G09</name>
        <name>22g+29.3</name>
        <sequence type="described" ref="VSP_018245"/>
    </isoform>
    <isoform>
        <id>Q9R1V6-9</id>
        <name>7</name>
        <name>ADAM22-G10</name>
        <name>22g+29.1</name>
        <sequence type="described" ref="VSP_018241"/>
    </isoform>
    <isoform>
        <id>Q9R1V6-10</id>
        <name>8</name>
        <name>ADAM22-G11</name>
        <name>22g(D27)+29.5+29.7</name>
        <sequence type="described" ref="VSP_018238 VSP_018246"/>
    </isoform>
    <isoform>
        <id>Q9R1V6-11</id>
        <name>9</name>
        <name>ADAM22-G12</name>
        <name>22g+29.3+29.7</name>
        <sequence type="described" ref="VSP_018247"/>
    </isoform>
    <isoform>
        <id>Q9R1V6-12</id>
        <name>10</name>
        <name>ADAM22-G17</name>
        <name>22G[27L]+29.3+29.7</name>
        <sequence type="described" ref="VSP_018239 VSP_018242"/>
    </isoform>
    <isoform>
        <id>Q9R1V6-13</id>
        <name>11</name>
        <name>ADAM22-G18</name>
        <name>22g(D26)[27L]</name>
        <sequence type="described" ref="VSP_018236 VSP_018239"/>
    </isoform>
    <isoform>
        <id>Q9R1V6-14</id>
        <name>12</name>
        <name>ADAM22-G19</name>
        <name>22g[27L]+29.5</name>
        <sequence type="described" ref="VSP_018239 VSP_018243"/>
    </isoform>
    <isoform>
        <id>Q9R1V6-15</id>
        <name>13</name>
        <name>ADAM22-G20</name>
        <name>22g[27L]</name>
        <sequence type="described" ref="VSP_018239"/>
    </isoform>
    <isoform>
        <id>Q9R1V6-16</id>
        <name>14</name>
        <name>ADAM22-G21</name>
        <name>22g(D26)[27S]</name>
        <sequence type="described" ref="VSP_018234"/>
    </isoform>
    <isoform>
        <id>Q9R1V6-17</id>
        <name>15</name>
        <name>ADAM22-G22</name>
        <name>22g(D27)+29.7</name>
        <sequence type="described" ref="VSP_018238 VSP_018244"/>
    </isoform>
    <isoform>
        <id>Q9R1V6-18</id>
        <name>16</name>
        <name>ADAM22-G23</name>
        <name>22g(D25D26D27)</name>
        <sequence type="described" ref="VSP_018233"/>
    </isoform>
    <isoform>
        <id>Q9R1V6-2</id>
        <name>17</name>
        <name>ADAM22-A05</name>
        <name>Beta</name>
        <sequence type="described" ref="VSP_018238 VSP_018248"/>
    </isoform>
    <isoform>
        <id>Q9R1V6-19</id>
        <name>18</name>
        <name>ADAM22-A13</name>
        <sequence type="described" ref="VSP_018235 VSP_018248"/>
    </isoform>
    <isoform>
        <id>Q9R1V6-20</id>
        <name>19</name>
        <name>ADAM22-A15</name>
        <sequence type="described" ref="VSP_018236 VSP_018248"/>
    </isoform>
    <isoform>
        <id>Q9R1V6-1</id>
        <name>20</name>
        <name>ADAM22-A04</name>
        <name>Alpha</name>
        <sequence type="described" ref="VSP_018248"/>
    </isoform>
    <isoform>
        <id>Q9R1V6-21</id>
        <name>21</name>
        <name>ADAM22-A16</name>
        <sequence type="described" ref="VSP_018237 VSP_018240"/>
    </isoform>
</comment>
<comment type="tissue specificity">
    <text evidence="8 11 12">Detected in juxtaparanodal zones in the central nervous system and at nerve terminal plexuses of basket cells in the cerebellum (at protein level) (PubMed:20089912, PubMed:26269648). Expressed at high levels in the brain. Strongly expressed in cerebellar granule cells and hippocampus. In spinal cord, expression is restricted to gray matter.</text>
</comment>
<comment type="PTM">
    <text evidence="1">The precursor is cleaved by a furin endopeptidase.</text>
</comment>
<comment type="disruption phenotype">
    <text evidence="8">Mice display severe ataxia within one week after birth and die before weaning, probably due to convulsions. They display marked hypomyelination of the peripheral nerves.</text>
</comment>
<organism>
    <name type="scientific">Mus musculus</name>
    <name type="common">Mouse</name>
    <dbReference type="NCBI Taxonomy" id="10090"/>
    <lineage>
        <taxon>Eukaryota</taxon>
        <taxon>Metazoa</taxon>
        <taxon>Chordata</taxon>
        <taxon>Craniata</taxon>
        <taxon>Vertebrata</taxon>
        <taxon>Euteleostomi</taxon>
        <taxon>Mammalia</taxon>
        <taxon>Eutheria</taxon>
        <taxon>Euarchontoglires</taxon>
        <taxon>Glires</taxon>
        <taxon>Rodentia</taxon>
        <taxon>Myomorpha</taxon>
        <taxon>Muroidea</taxon>
        <taxon>Muridae</taxon>
        <taxon>Murinae</taxon>
        <taxon>Mus</taxon>
        <taxon>Mus</taxon>
    </lineage>
</organism>
<evidence type="ECO:0000250" key="1"/>
<evidence type="ECO:0000250" key="2">
    <source>
        <dbReference type="UniProtKB" id="Q9P0K1"/>
    </source>
</evidence>
<evidence type="ECO:0000255" key="3"/>
<evidence type="ECO:0000255" key="4">
    <source>
        <dbReference type="PROSITE-ProRule" id="PRU00068"/>
    </source>
</evidence>
<evidence type="ECO:0000255" key="5">
    <source>
        <dbReference type="PROSITE-ProRule" id="PRU00076"/>
    </source>
</evidence>
<evidence type="ECO:0000255" key="6">
    <source>
        <dbReference type="PROSITE-ProRule" id="PRU00276"/>
    </source>
</evidence>
<evidence type="ECO:0000256" key="7">
    <source>
        <dbReference type="SAM" id="MobiDB-lite"/>
    </source>
</evidence>
<evidence type="ECO:0000269" key="8">
    <source>
    </source>
</evidence>
<evidence type="ECO:0000269" key="9">
    <source>
    </source>
</evidence>
<evidence type="ECO:0000269" key="10">
    <source>
    </source>
</evidence>
<evidence type="ECO:0000269" key="11">
    <source>
    </source>
</evidence>
<evidence type="ECO:0000269" key="12">
    <source>
    </source>
</evidence>
<evidence type="ECO:0000303" key="13">
    <source>
    </source>
</evidence>
<evidence type="ECO:0000303" key="14">
    <source>
    </source>
</evidence>
<evidence type="ECO:0000303" key="15">
    <source>
    </source>
</evidence>
<evidence type="ECO:0000305" key="16"/>
<evidence type="ECO:0007744" key="17">
    <source>
    </source>
</evidence>
<keyword id="KW-0002">3D-structure</keyword>
<keyword id="KW-0025">Alternative splicing</keyword>
<keyword id="KW-1003">Cell membrane</keyword>
<keyword id="KW-0966">Cell projection</keyword>
<keyword id="KW-0165">Cleavage on pair of basic residues</keyword>
<keyword id="KW-1015">Disulfide bond</keyword>
<keyword id="KW-0245">EGF-like domain</keyword>
<keyword id="KW-0325">Glycoprotein</keyword>
<keyword id="KW-0472">Membrane</keyword>
<keyword id="KW-0597">Phosphoprotein</keyword>
<keyword id="KW-0675">Receptor</keyword>
<keyword id="KW-1185">Reference proteome</keyword>
<keyword id="KW-0732">Signal</keyword>
<keyword id="KW-0812">Transmembrane</keyword>
<keyword id="KW-1133">Transmembrane helix</keyword>
<reference key="1">
    <citation type="journal article" date="1999" name="Gene">
        <title>Cloning and chromosomal mapping of mouse ADAM11, ADAM22 and ADAM23.</title>
        <authorList>
            <person name="Sagane K."/>
            <person name="Yamazaki K."/>
            <person name="Mizui Y."/>
            <person name="Tanaka I."/>
        </authorList>
    </citation>
    <scope>NUCLEOTIDE SEQUENCE [MRNA] (ISOFORMS 17 AND 20)</scope>
    <source>
        <tissue>Brain</tissue>
    </source>
</reference>
<reference key="2">
    <citation type="journal article" date="2005" name="Science">
        <title>The transcriptional landscape of the mammalian genome.</title>
        <authorList>
            <person name="Carninci P."/>
            <person name="Kasukawa T."/>
            <person name="Katayama S."/>
            <person name="Gough J."/>
            <person name="Frith M.C."/>
            <person name="Maeda N."/>
            <person name="Oyama R."/>
            <person name="Ravasi T."/>
            <person name="Lenhard B."/>
            <person name="Wells C."/>
            <person name="Kodzius R."/>
            <person name="Shimokawa K."/>
            <person name="Bajic V.B."/>
            <person name="Brenner S.E."/>
            <person name="Batalov S."/>
            <person name="Forrest A.R."/>
            <person name="Zavolan M."/>
            <person name="Davis M.J."/>
            <person name="Wilming L.G."/>
            <person name="Aidinis V."/>
            <person name="Allen J.E."/>
            <person name="Ambesi-Impiombato A."/>
            <person name="Apweiler R."/>
            <person name="Aturaliya R.N."/>
            <person name="Bailey T.L."/>
            <person name="Bansal M."/>
            <person name="Baxter L."/>
            <person name="Beisel K.W."/>
            <person name="Bersano T."/>
            <person name="Bono H."/>
            <person name="Chalk A.M."/>
            <person name="Chiu K.P."/>
            <person name="Choudhary V."/>
            <person name="Christoffels A."/>
            <person name="Clutterbuck D.R."/>
            <person name="Crowe M.L."/>
            <person name="Dalla E."/>
            <person name="Dalrymple B.P."/>
            <person name="de Bono B."/>
            <person name="Della Gatta G."/>
            <person name="di Bernardo D."/>
            <person name="Down T."/>
            <person name="Engstrom P."/>
            <person name="Fagiolini M."/>
            <person name="Faulkner G."/>
            <person name="Fletcher C.F."/>
            <person name="Fukushima T."/>
            <person name="Furuno M."/>
            <person name="Futaki S."/>
            <person name="Gariboldi M."/>
            <person name="Georgii-Hemming P."/>
            <person name="Gingeras T.R."/>
            <person name="Gojobori T."/>
            <person name="Green R.E."/>
            <person name="Gustincich S."/>
            <person name="Harbers M."/>
            <person name="Hayashi Y."/>
            <person name="Hensch T.K."/>
            <person name="Hirokawa N."/>
            <person name="Hill D."/>
            <person name="Huminiecki L."/>
            <person name="Iacono M."/>
            <person name="Ikeo K."/>
            <person name="Iwama A."/>
            <person name="Ishikawa T."/>
            <person name="Jakt M."/>
            <person name="Kanapin A."/>
            <person name="Katoh M."/>
            <person name="Kawasawa Y."/>
            <person name="Kelso J."/>
            <person name="Kitamura H."/>
            <person name="Kitano H."/>
            <person name="Kollias G."/>
            <person name="Krishnan S.P."/>
            <person name="Kruger A."/>
            <person name="Kummerfeld S.K."/>
            <person name="Kurochkin I.V."/>
            <person name="Lareau L.F."/>
            <person name="Lazarevic D."/>
            <person name="Lipovich L."/>
            <person name="Liu J."/>
            <person name="Liuni S."/>
            <person name="McWilliam S."/>
            <person name="Madan Babu M."/>
            <person name="Madera M."/>
            <person name="Marchionni L."/>
            <person name="Matsuda H."/>
            <person name="Matsuzawa S."/>
            <person name="Miki H."/>
            <person name="Mignone F."/>
            <person name="Miyake S."/>
            <person name="Morris K."/>
            <person name="Mottagui-Tabar S."/>
            <person name="Mulder N."/>
            <person name="Nakano N."/>
            <person name="Nakauchi H."/>
            <person name="Ng P."/>
            <person name="Nilsson R."/>
            <person name="Nishiguchi S."/>
            <person name="Nishikawa S."/>
            <person name="Nori F."/>
            <person name="Ohara O."/>
            <person name="Okazaki Y."/>
            <person name="Orlando V."/>
            <person name="Pang K.C."/>
            <person name="Pavan W.J."/>
            <person name="Pavesi G."/>
            <person name="Pesole G."/>
            <person name="Petrovsky N."/>
            <person name="Piazza S."/>
            <person name="Reed J."/>
            <person name="Reid J.F."/>
            <person name="Ring B.Z."/>
            <person name="Ringwald M."/>
            <person name="Rost B."/>
            <person name="Ruan Y."/>
            <person name="Salzberg S.L."/>
            <person name="Sandelin A."/>
            <person name="Schneider C."/>
            <person name="Schoenbach C."/>
            <person name="Sekiguchi K."/>
            <person name="Semple C.A."/>
            <person name="Seno S."/>
            <person name="Sessa L."/>
            <person name="Sheng Y."/>
            <person name="Shibata Y."/>
            <person name="Shimada H."/>
            <person name="Shimada K."/>
            <person name="Silva D."/>
            <person name="Sinclair B."/>
            <person name="Sperling S."/>
            <person name="Stupka E."/>
            <person name="Sugiura K."/>
            <person name="Sultana R."/>
            <person name="Takenaka Y."/>
            <person name="Taki K."/>
            <person name="Tammoja K."/>
            <person name="Tan S.L."/>
            <person name="Tang S."/>
            <person name="Taylor M.S."/>
            <person name="Tegner J."/>
            <person name="Teichmann S.A."/>
            <person name="Ueda H.R."/>
            <person name="van Nimwegen E."/>
            <person name="Verardo R."/>
            <person name="Wei C.L."/>
            <person name="Yagi K."/>
            <person name="Yamanishi H."/>
            <person name="Zabarovsky E."/>
            <person name="Zhu S."/>
            <person name="Zimmer A."/>
            <person name="Hide W."/>
            <person name="Bult C."/>
            <person name="Grimmond S.M."/>
            <person name="Teasdale R.D."/>
            <person name="Liu E.T."/>
            <person name="Brusic V."/>
            <person name="Quackenbush J."/>
            <person name="Wahlestedt C."/>
            <person name="Mattick J.S."/>
            <person name="Hume D.A."/>
            <person name="Kai C."/>
            <person name="Sasaki D."/>
            <person name="Tomaru Y."/>
            <person name="Fukuda S."/>
            <person name="Kanamori-Katayama M."/>
            <person name="Suzuki M."/>
            <person name="Aoki J."/>
            <person name="Arakawa T."/>
            <person name="Iida J."/>
            <person name="Imamura K."/>
            <person name="Itoh M."/>
            <person name="Kato T."/>
            <person name="Kawaji H."/>
            <person name="Kawagashira N."/>
            <person name="Kawashima T."/>
            <person name="Kojima M."/>
            <person name="Kondo S."/>
            <person name="Konno H."/>
            <person name="Nakano K."/>
            <person name="Ninomiya N."/>
            <person name="Nishio T."/>
            <person name="Okada M."/>
            <person name="Plessy C."/>
            <person name="Shibata K."/>
            <person name="Shiraki T."/>
            <person name="Suzuki S."/>
            <person name="Tagami M."/>
            <person name="Waki K."/>
            <person name="Watahiki A."/>
            <person name="Okamura-Oho Y."/>
            <person name="Suzuki H."/>
            <person name="Kawai J."/>
            <person name="Hayashizaki Y."/>
        </authorList>
    </citation>
    <scope>NUCLEOTIDE SEQUENCE [LARGE SCALE MRNA] OF 619-904 (ISOFORM 2)</scope>
    <source>
        <strain>C57BL/6J</strain>
        <tissue>Embryo</tissue>
    </source>
</reference>
<reference key="3">
    <citation type="journal article" date="2005" name="BMC Neurosci.">
        <title>Ataxia and peripheral nerve hypomyelination in ADAM22-deficient mice.</title>
        <authorList>
            <person name="Sagane K."/>
            <person name="Hayakawa K."/>
            <person name="Kai J."/>
            <person name="Hirohashi T."/>
            <person name="Takahashi E."/>
            <person name="Miyamoto N."/>
            <person name="Ino M."/>
            <person name="Oki T."/>
            <person name="Yamazaki K."/>
            <person name="Nagasu T."/>
        </authorList>
    </citation>
    <scope>NUCLEOTIDE SEQUENCE [MRNA] OF 709-904 (ISOFORMS 1; 2; 3; 4; 5; 6; 7; 8; 9; 10; 11; 12; 13; 14; 15; 16; 17; 18; 19; 20 AND 21)</scope>
    <scope>TISSUE SPECIFICITY</scope>
    <scope>DISRUPTION PHENOTYPE</scope>
</reference>
<reference key="4">
    <citation type="journal article" date="2006" name="Science">
        <title>Epilepsy-related ligand/receptor complex LGI1 and ADAM22 regulate synaptic transmission.</title>
        <authorList>
            <person name="Fukata Y."/>
            <person name="Adesnik H."/>
            <person name="Iwanaga T."/>
            <person name="Bredt D.S."/>
            <person name="Nicoll R.A."/>
            <person name="Fukata M."/>
        </authorList>
    </citation>
    <scope>FUNCTION</scope>
    <scope>INTERACTION WITH LGI1</scope>
    <scope>MUTAGENESIS OF ASP-509</scope>
</reference>
<reference key="5">
    <citation type="journal article" date="2008" name="Int. J. Biol. Sci.">
        <title>LGI1 and LGI4 bind to ADAM22, ADAM23 and ADAM11.</title>
        <authorList>
            <person name="Sagane K."/>
            <person name="Ishihama Y."/>
            <person name="Sugimoto H."/>
        </authorList>
    </citation>
    <scope>INTERACTION WITH LIGI1 AND LGI4</scope>
</reference>
<reference key="6">
    <citation type="journal article" date="2010" name="Cell">
        <title>A tissue-specific atlas of mouse protein phosphorylation and expression.</title>
        <authorList>
            <person name="Huttlin E.L."/>
            <person name="Jedrychowski M.P."/>
            <person name="Elias J.E."/>
            <person name="Goswami T."/>
            <person name="Rad R."/>
            <person name="Beausoleil S.A."/>
            <person name="Villen J."/>
            <person name="Haas W."/>
            <person name="Sowa M.E."/>
            <person name="Gygi S.P."/>
        </authorList>
    </citation>
    <scope>PHOSPHORYLATION [LARGE SCALE ANALYSIS] AT SER-808; SER-832; SER-855; SER-860; SER-864 AND SER-868</scope>
    <scope>PHOSPHORYLATION [LARGE SCALE ANALYSIS] AT SER-882 (ISOFORM 12)</scope>
    <scope>PHOSPHORYLATION [LARGE SCALE ANALYSIS] AT SER-817 (ISOFORM 8)</scope>
    <scope>IDENTIFICATION BY MASS SPECTROMETRY [LARGE SCALE ANALYSIS]</scope>
    <source>
        <tissue>Brain</tissue>
        <tissue>Kidney</tissue>
    </source>
</reference>
<reference key="7">
    <citation type="journal article" date="2010" name="J. Neurosci.">
        <title>ADAM22, a Kv1 channel-interacting protein, recruits membrane-associated guanylate kinases to juxtaparanodes of myelinated axons.</title>
        <authorList>
            <person name="Ogawa Y."/>
            <person name="Oses-Prieto J."/>
            <person name="Kim M.Y."/>
            <person name="Horresh I."/>
            <person name="Peles E."/>
            <person name="Burlingame A.L."/>
            <person name="Trimmer J.S."/>
            <person name="Meijer D."/>
            <person name="Rasband M.N."/>
        </authorList>
    </citation>
    <scope>INTERACTION WITH KCNA2; LGI1; DLG2 AND DLG4</scope>
    <scope>SUBCELLULAR LOCATION</scope>
    <scope>TISSUE SPECIFICITY</scope>
</reference>
<reference key="8">
    <citation type="journal article" date="2015" name="J. Neurosci.">
        <title>Selective Loss of Presynaptic Potassium Channel Clusters at the Cerebellar Basket Cell Terminal Pinceau in Adam11 Mutants Reveals Their Role in Ephaptic Control of Purkinje Cell Firing.</title>
        <authorList>
            <person name="Kole M.J."/>
            <person name="Qian J."/>
            <person name="Waase M.P."/>
            <person name="Klassen T.L."/>
            <person name="Chen T.T."/>
            <person name="Augustine G.J."/>
            <person name="Noebels J.L."/>
        </authorList>
    </citation>
    <scope>INTERACTION WITH ADAM11</scope>
    <scope>TISSUE SPECIFICITY</scope>
</reference>
<protein>
    <recommendedName>
        <fullName>Disintegrin and metalloproteinase domain-containing protein 22</fullName>
        <shortName>ADAM 22</shortName>
    </recommendedName>
</protein>
<name>ADA22_MOUSE</name>
<dbReference type="EMBL" id="AB009674">
    <property type="protein sequence ID" value="BAA83382.1"/>
    <property type="molecule type" value="mRNA"/>
</dbReference>
<dbReference type="EMBL" id="AB009674">
    <property type="protein sequence ID" value="BAA83383.1"/>
    <property type="molecule type" value="mRNA"/>
</dbReference>
<dbReference type="EMBL" id="AK034528">
    <property type="protein sequence ID" value="BAC28742.1"/>
    <property type="molecule type" value="mRNA"/>
</dbReference>
<dbReference type="EMBL" id="AB179842">
    <property type="protein sequence ID" value="BAD72803.1"/>
    <property type="molecule type" value="mRNA"/>
</dbReference>
<dbReference type="EMBL" id="AB179843">
    <property type="protein sequence ID" value="BAD72804.1"/>
    <property type="molecule type" value="mRNA"/>
</dbReference>
<dbReference type="EMBL" id="AB179844">
    <property type="protein sequence ID" value="BAD72805.1"/>
    <property type="molecule type" value="mRNA"/>
</dbReference>
<dbReference type="EMBL" id="AB179845">
    <property type="protein sequence ID" value="BAD72806.1"/>
    <property type="molecule type" value="mRNA"/>
</dbReference>
<dbReference type="EMBL" id="AB179846">
    <property type="protein sequence ID" value="BAD72807.1"/>
    <property type="molecule type" value="mRNA"/>
</dbReference>
<dbReference type="EMBL" id="AB179847">
    <property type="protein sequence ID" value="BAD72808.1"/>
    <property type="molecule type" value="mRNA"/>
</dbReference>
<dbReference type="EMBL" id="AB179848">
    <property type="protein sequence ID" value="BAD72809.1"/>
    <property type="molecule type" value="mRNA"/>
</dbReference>
<dbReference type="EMBL" id="AB179849">
    <property type="protein sequence ID" value="BAD72810.1"/>
    <property type="molecule type" value="mRNA"/>
</dbReference>
<dbReference type="EMBL" id="AB179850">
    <property type="protein sequence ID" value="BAD72811.1"/>
    <property type="molecule type" value="mRNA"/>
</dbReference>
<dbReference type="EMBL" id="AB179851">
    <property type="protein sequence ID" value="BAD72812.1"/>
    <property type="molecule type" value="mRNA"/>
</dbReference>
<dbReference type="EMBL" id="AB179852">
    <property type="protein sequence ID" value="BAD72813.1"/>
    <property type="molecule type" value="mRNA"/>
</dbReference>
<dbReference type="EMBL" id="AB179853">
    <property type="protein sequence ID" value="BAD72814.1"/>
    <property type="molecule type" value="mRNA"/>
</dbReference>
<dbReference type="EMBL" id="AB179854">
    <property type="protein sequence ID" value="BAD72815.1"/>
    <property type="molecule type" value="mRNA"/>
</dbReference>
<dbReference type="EMBL" id="AB179855">
    <property type="protein sequence ID" value="BAD72816.1"/>
    <property type="molecule type" value="mRNA"/>
</dbReference>
<dbReference type="EMBL" id="AB179856">
    <property type="protein sequence ID" value="BAD72817.1"/>
    <property type="molecule type" value="mRNA"/>
</dbReference>
<dbReference type="EMBL" id="AB179857">
    <property type="protein sequence ID" value="BAD72818.1"/>
    <property type="molecule type" value="mRNA"/>
</dbReference>
<dbReference type="EMBL" id="AB179858">
    <property type="protein sequence ID" value="BAD72819.1"/>
    <property type="molecule type" value="mRNA"/>
</dbReference>
<dbReference type="EMBL" id="AB179859">
    <property type="protein sequence ID" value="BAD72820.1"/>
    <property type="molecule type" value="mRNA"/>
</dbReference>
<dbReference type="EMBL" id="AB179860">
    <property type="protein sequence ID" value="BAD72821.1"/>
    <property type="molecule type" value="mRNA"/>
</dbReference>
<dbReference type="EMBL" id="AB179861">
    <property type="protein sequence ID" value="BAD72822.1"/>
    <property type="molecule type" value="mRNA"/>
</dbReference>
<dbReference type="EMBL" id="AB179862">
    <property type="protein sequence ID" value="BAD72823.1"/>
    <property type="molecule type" value="mRNA"/>
</dbReference>
<dbReference type="CCDS" id="CCDS19080.1">
    <molecule id="Q9R1V6-1"/>
</dbReference>
<dbReference type="CCDS" id="CCDS51411.1">
    <molecule id="Q9R1V6-4"/>
</dbReference>
<dbReference type="CCDS" id="CCDS80205.1">
    <molecule id="Q9R1V6-6"/>
</dbReference>
<dbReference type="CCDS" id="CCDS80207.1">
    <molecule id="Q9R1V6-3"/>
</dbReference>
<dbReference type="RefSeq" id="NP_001007221.1">
    <molecule id="Q9R1V6-1"/>
    <property type="nucleotide sequence ID" value="NM_001007220.4"/>
</dbReference>
<dbReference type="RefSeq" id="NP_001007222.1">
    <molecule id="Q9R1V6-2"/>
    <property type="nucleotide sequence ID" value="NM_001007221.4"/>
</dbReference>
<dbReference type="RefSeq" id="NP_001091695.1">
    <molecule id="Q9R1V6-4"/>
    <property type="nucleotide sequence ID" value="NM_001098225.3"/>
</dbReference>
<dbReference type="RefSeq" id="NP_001297368.1">
    <molecule id="Q9R1V6-6"/>
    <property type="nucleotide sequence ID" value="NM_001310439.2"/>
</dbReference>
<dbReference type="RefSeq" id="NP_001297369.1">
    <molecule id="Q9R1V6-3"/>
    <property type="nucleotide sequence ID" value="NM_001310440.2"/>
</dbReference>
<dbReference type="RefSeq" id="NP_001405015.1">
    <molecule id="Q9R1V6-5"/>
    <property type="nucleotide sequence ID" value="NM_001418086.1"/>
</dbReference>
<dbReference type="RefSeq" id="XP_006503592.1">
    <molecule id="Q9R1V6-12"/>
    <property type="nucleotide sequence ID" value="XM_006503529.5"/>
</dbReference>
<dbReference type="RefSeq" id="XP_006503593.1">
    <molecule id="Q9R1V6-11"/>
    <property type="nucleotide sequence ID" value="XM_006503530.5"/>
</dbReference>
<dbReference type="RefSeq" id="XP_006503594.1">
    <molecule id="Q9R1V6-14"/>
    <property type="nucleotide sequence ID" value="XM_006503531.5"/>
</dbReference>
<dbReference type="RefSeq" id="XP_006503596.1">
    <molecule id="Q9R1V6-8"/>
    <property type="nucleotide sequence ID" value="XM_006503533.5"/>
</dbReference>
<dbReference type="RefSeq" id="XP_006503598.1">
    <molecule id="Q9R1V6-15"/>
    <property type="nucleotide sequence ID" value="XM_006503535.5"/>
</dbReference>
<dbReference type="RefSeq" id="XP_006503600.1">
    <molecule id="Q9R1V6-7"/>
    <property type="nucleotide sequence ID" value="XM_006503537.5"/>
</dbReference>
<dbReference type="RefSeq" id="XP_006503605.1">
    <property type="nucleotide sequence ID" value="XM_006503542.3"/>
</dbReference>
<dbReference type="PDB" id="7EXE">
    <property type="method" value="X-ray"/>
    <property type="resolution" value="2.75 A"/>
    <property type="chains" value="C=827-857"/>
</dbReference>
<dbReference type="PDBsum" id="7EXE"/>
<dbReference type="SMR" id="Q9R1V6"/>
<dbReference type="BioGRID" id="197967">
    <property type="interactions" value="26"/>
</dbReference>
<dbReference type="FunCoup" id="Q9R1V6">
    <property type="interactions" value="967"/>
</dbReference>
<dbReference type="IntAct" id="Q9R1V6">
    <property type="interactions" value="5"/>
</dbReference>
<dbReference type="STRING" id="10090.ENSMUSP00000086139"/>
<dbReference type="MEROPS" id="M12.978"/>
<dbReference type="GlyConnect" id="2258">
    <property type="glycosylation" value="1 N-Linked glycan (1 site)"/>
</dbReference>
<dbReference type="GlyConnect" id="2413">
    <molecule id="Q9R1V6-16"/>
    <property type="glycosylation" value="11 N-Linked glycans (3 sites)"/>
</dbReference>
<dbReference type="GlyConnect" id="2443">
    <molecule id="Q9R1V6-10"/>
    <property type="glycosylation" value="6 N-Linked glycans (2 sites)"/>
</dbReference>
<dbReference type="GlyConnect" id="2444">
    <molecule id="Q9R1V6-11"/>
    <property type="glycosylation" value="2 N-Linked glycans (2 sites)"/>
</dbReference>
<dbReference type="GlyCosmos" id="Q9R1V6">
    <property type="glycosylation" value="5 sites, 14 glycans"/>
</dbReference>
<dbReference type="GlyGen" id="Q9R1V6">
    <property type="glycosylation" value="6 sites, 18 N-linked glycans (5 sites), 1 O-linked glycan (1 site)"/>
</dbReference>
<dbReference type="iPTMnet" id="Q9R1V6"/>
<dbReference type="PhosphoSitePlus" id="Q9R1V6"/>
<dbReference type="SwissPalm" id="Q9R1V6"/>
<dbReference type="PaxDb" id="10090-ENSMUSP00000055000"/>
<dbReference type="PeptideAtlas" id="Q9R1V6"/>
<dbReference type="ProteomicsDB" id="285860">
    <molecule id="Q9R1V6-3"/>
</dbReference>
<dbReference type="ProteomicsDB" id="285861">
    <molecule id="Q9R1V6-4"/>
</dbReference>
<dbReference type="ProteomicsDB" id="285862">
    <molecule id="Q9R1V6-5"/>
</dbReference>
<dbReference type="ProteomicsDB" id="285863">
    <molecule id="Q9R1V6-6"/>
</dbReference>
<dbReference type="ProteomicsDB" id="285864">
    <molecule id="Q9R1V6-7"/>
</dbReference>
<dbReference type="ProteomicsDB" id="285865">
    <molecule id="Q9R1V6-8"/>
</dbReference>
<dbReference type="ProteomicsDB" id="285866">
    <molecule id="Q9R1V6-9"/>
</dbReference>
<dbReference type="ProteomicsDB" id="285867">
    <molecule id="Q9R1V6-10"/>
</dbReference>
<dbReference type="ProteomicsDB" id="285868">
    <molecule id="Q9R1V6-11"/>
</dbReference>
<dbReference type="ProteomicsDB" id="285869">
    <molecule id="Q9R1V6-12"/>
</dbReference>
<dbReference type="ProteomicsDB" id="285870">
    <molecule id="Q9R1V6-13"/>
</dbReference>
<dbReference type="ProteomicsDB" id="285871">
    <molecule id="Q9R1V6-14"/>
</dbReference>
<dbReference type="ProteomicsDB" id="285872">
    <molecule id="Q9R1V6-15"/>
</dbReference>
<dbReference type="ProteomicsDB" id="285873">
    <molecule id="Q9R1V6-16"/>
</dbReference>
<dbReference type="ProteomicsDB" id="285874">
    <molecule id="Q9R1V6-17"/>
</dbReference>
<dbReference type="ProteomicsDB" id="285875">
    <molecule id="Q9R1V6-18"/>
</dbReference>
<dbReference type="ProteomicsDB" id="285876">
    <molecule id="Q9R1V6-2"/>
</dbReference>
<dbReference type="ProteomicsDB" id="285877">
    <molecule id="Q9R1V6-19"/>
</dbReference>
<dbReference type="ProteomicsDB" id="285878">
    <molecule id="Q9R1V6-20"/>
</dbReference>
<dbReference type="ProteomicsDB" id="285879">
    <molecule id="Q9R1V6-1"/>
</dbReference>
<dbReference type="ProteomicsDB" id="285880">
    <molecule id="Q9R1V6-21"/>
</dbReference>
<dbReference type="ABCD" id="Q9R1V6">
    <property type="antibodies" value="2 sequenced antibodies"/>
</dbReference>
<dbReference type="Antibodypedia" id="29782">
    <property type="antibodies" value="312 antibodies from 27 providers"/>
</dbReference>
<dbReference type="DNASU" id="11496"/>
<dbReference type="Ensembl" id="ENSMUST00000046838.14">
    <molecule id="Q9R1V6-1"/>
    <property type="protein sequence ID" value="ENSMUSP00000049120.8"/>
    <property type="gene ID" value="ENSMUSG00000040537.18"/>
</dbReference>
<dbReference type="Ensembl" id="ENSMUST00000050166.14">
    <molecule id="Q9R1V6-4"/>
    <property type="protein sequence ID" value="ENSMUSP00000055000.8"/>
    <property type="gene ID" value="ENSMUSG00000040537.18"/>
</dbReference>
<dbReference type="Ensembl" id="ENSMUST00000088744.12">
    <molecule id="Q9R1V6-13"/>
    <property type="protein sequence ID" value="ENSMUSP00000086122.6"/>
    <property type="gene ID" value="ENSMUSG00000040537.18"/>
</dbReference>
<dbReference type="Ensembl" id="ENSMUST00000088761.11">
    <molecule id="Q9R1V6-3"/>
    <property type="protein sequence ID" value="ENSMUSP00000086139.5"/>
    <property type="gene ID" value="ENSMUSG00000040537.18"/>
</dbReference>
<dbReference type="Ensembl" id="ENSMUST00000115388.9">
    <molecule id="Q9R1V6-6"/>
    <property type="protein sequence ID" value="ENSMUSP00000111046.3"/>
    <property type="gene ID" value="ENSMUSG00000040537.18"/>
</dbReference>
<dbReference type="GeneID" id="11496"/>
<dbReference type="KEGG" id="mmu:11496"/>
<dbReference type="UCSC" id="uc008wjk.2">
    <molecule id="Q9R1V6-3"/>
    <property type="organism name" value="mouse"/>
</dbReference>
<dbReference type="UCSC" id="uc008wjv.1">
    <molecule id="Q9R1V6-4"/>
    <property type="organism name" value="mouse"/>
</dbReference>
<dbReference type="UCSC" id="uc008wjy.1">
    <molecule id="Q9R1V6-2"/>
    <property type="organism name" value="mouse"/>
</dbReference>
<dbReference type="AGR" id="MGI:1340046"/>
<dbReference type="CTD" id="53616"/>
<dbReference type="MGI" id="MGI:1340046">
    <property type="gene designation" value="Adam22"/>
</dbReference>
<dbReference type="VEuPathDB" id="HostDB:ENSMUSG00000040537"/>
<dbReference type="eggNOG" id="KOG3607">
    <property type="taxonomic scope" value="Eukaryota"/>
</dbReference>
<dbReference type="GeneTree" id="ENSGT00940000156889"/>
<dbReference type="HOGENOM" id="CLU_012714_5_2_1"/>
<dbReference type="InParanoid" id="Q9R1V6"/>
<dbReference type="OMA" id="TAWGYNM"/>
<dbReference type="PhylomeDB" id="Q9R1V6"/>
<dbReference type="TreeFam" id="TF314733"/>
<dbReference type="Reactome" id="R-MMU-5682910">
    <property type="pathway name" value="LGI-ADAM interactions"/>
</dbReference>
<dbReference type="BioGRID-ORCS" id="11496">
    <property type="hits" value="1 hit in 76 CRISPR screens"/>
</dbReference>
<dbReference type="CD-CODE" id="CE726F99">
    <property type="entry name" value="Postsynaptic density"/>
</dbReference>
<dbReference type="ChiTaRS" id="Adam22">
    <property type="organism name" value="mouse"/>
</dbReference>
<dbReference type="PRO" id="PR:Q9R1V6"/>
<dbReference type="Proteomes" id="UP000000589">
    <property type="component" value="Chromosome 5"/>
</dbReference>
<dbReference type="RNAct" id="Q9R1V6">
    <property type="molecule type" value="protein"/>
</dbReference>
<dbReference type="Bgee" id="ENSMUSG00000040537">
    <property type="expression patterns" value="Expressed in cerebellum lobe and 194 other cell types or tissues"/>
</dbReference>
<dbReference type="ExpressionAtlas" id="Q9R1V6">
    <property type="expression patterns" value="baseline and differential"/>
</dbReference>
<dbReference type="GO" id="GO:0030424">
    <property type="term" value="C:axon"/>
    <property type="evidence" value="ECO:0000314"/>
    <property type="project" value="UniProtKB"/>
</dbReference>
<dbReference type="GO" id="GO:0043194">
    <property type="term" value="C:axon initial segment"/>
    <property type="evidence" value="ECO:0007669"/>
    <property type="project" value="Ensembl"/>
</dbReference>
<dbReference type="GO" id="GO:0098978">
    <property type="term" value="C:glutamatergic synapse"/>
    <property type="evidence" value="ECO:0000314"/>
    <property type="project" value="SynGO"/>
</dbReference>
<dbReference type="GO" id="GO:0016020">
    <property type="term" value="C:membrane"/>
    <property type="evidence" value="ECO:0000314"/>
    <property type="project" value="UniProtKB"/>
</dbReference>
<dbReference type="GO" id="GO:0098839">
    <property type="term" value="C:postsynaptic density membrane"/>
    <property type="evidence" value="ECO:0000314"/>
    <property type="project" value="SynGO"/>
</dbReference>
<dbReference type="GO" id="GO:0004222">
    <property type="term" value="F:metalloendopeptidase activity"/>
    <property type="evidence" value="ECO:0007669"/>
    <property type="project" value="InterPro"/>
</dbReference>
<dbReference type="GO" id="GO:0008344">
    <property type="term" value="P:adult locomotory behavior"/>
    <property type="evidence" value="ECO:0000315"/>
    <property type="project" value="MGI"/>
</dbReference>
<dbReference type="GO" id="GO:0042063">
    <property type="term" value="P:gliogenesis"/>
    <property type="evidence" value="ECO:0000316"/>
    <property type="project" value="MGI"/>
</dbReference>
<dbReference type="GO" id="GO:0022011">
    <property type="term" value="P:myelination in peripheral nervous system"/>
    <property type="evidence" value="ECO:0000315"/>
    <property type="project" value="MGI"/>
</dbReference>
<dbReference type="GO" id="GO:0099645">
    <property type="term" value="P:neurotransmitter receptor localization to postsynaptic specialization membrane"/>
    <property type="evidence" value="ECO:0000314"/>
    <property type="project" value="SynGO"/>
</dbReference>
<dbReference type="GO" id="GO:1903829">
    <property type="term" value="P:positive regulation of protein localization"/>
    <property type="evidence" value="ECO:0007669"/>
    <property type="project" value="Ensembl"/>
</dbReference>
<dbReference type="GO" id="GO:0006508">
    <property type="term" value="P:proteolysis"/>
    <property type="evidence" value="ECO:0007669"/>
    <property type="project" value="InterPro"/>
</dbReference>
<dbReference type="GO" id="GO:0014037">
    <property type="term" value="P:Schwann cell differentiation"/>
    <property type="evidence" value="ECO:0000315"/>
    <property type="project" value="MGI"/>
</dbReference>
<dbReference type="CDD" id="cd04269">
    <property type="entry name" value="ZnMc_adamalysin_II_like"/>
    <property type="match status" value="1"/>
</dbReference>
<dbReference type="FunFam" id="3.40.390.10:FF:000014">
    <property type="entry name" value="disintegrin and metalloproteinase domain-containing protein 11"/>
    <property type="match status" value="1"/>
</dbReference>
<dbReference type="FunFam" id="4.10.70.10:FF:000001">
    <property type="entry name" value="Disintegrin and metalloproteinase domain-containing protein 22"/>
    <property type="match status" value="1"/>
</dbReference>
<dbReference type="Gene3D" id="3.40.390.10">
    <property type="entry name" value="Collagenase (Catalytic Domain)"/>
    <property type="match status" value="1"/>
</dbReference>
<dbReference type="Gene3D" id="4.10.70.10">
    <property type="entry name" value="Disintegrin domain"/>
    <property type="match status" value="1"/>
</dbReference>
<dbReference type="Gene3D" id="2.10.25.10">
    <property type="entry name" value="Laminin"/>
    <property type="match status" value="1"/>
</dbReference>
<dbReference type="InterPro" id="IPR006586">
    <property type="entry name" value="ADAM_Cys-rich"/>
</dbReference>
<dbReference type="InterPro" id="IPR018358">
    <property type="entry name" value="Disintegrin_CS"/>
</dbReference>
<dbReference type="InterPro" id="IPR001762">
    <property type="entry name" value="Disintegrin_dom"/>
</dbReference>
<dbReference type="InterPro" id="IPR036436">
    <property type="entry name" value="Disintegrin_dom_sf"/>
</dbReference>
<dbReference type="InterPro" id="IPR000742">
    <property type="entry name" value="EGF-like_dom"/>
</dbReference>
<dbReference type="InterPro" id="IPR013111">
    <property type="entry name" value="EGF_extracell"/>
</dbReference>
<dbReference type="InterPro" id="IPR024079">
    <property type="entry name" value="MetalloPept_cat_dom_sf"/>
</dbReference>
<dbReference type="InterPro" id="IPR001590">
    <property type="entry name" value="Peptidase_M12B"/>
</dbReference>
<dbReference type="InterPro" id="IPR002870">
    <property type="entry name" value="Peptidase_M12B_N"/>
</dbReference>
<dbReference type="InterPro" id="IPR034027">
    <property type="entry name" value="Reprolysin_adamalysin"/>
</dbReference>
<dbReference type="PANTHER" id="PTHR11905">
    <property type="entry name" value="ADAM A DISINTEGRIN AND METALLOPROTEASE DOMAIN"/>
    <property type="match status" value="1"/>
</dbReference>
<dbReference type="PANTHER" id="PTHR11905:SF14">
    <property type="entry name" value="DISINTEGRIN AND METALLOPROTEINASE DOMAIN-CONTAINING PROTEIN 22"/>
    <property type="match status" value="1"/>
</dbReference>
<dbReference type="Pfam" id="PF08516">
    <property type="entry name" value="ADAM_CR"/>
    <property type="match status" value="1"/>
</dbReference>
<dbReference type="Pfam" id="PF00200">
    <property type="entry name" value="Disintegrin"/>
    <property type="match status" value="1"/>
</dbReference>
<dbReference type="Pfam" id="PF07974">
    <property type="entry name" value="EGF_2"/>
    <property type="match status" value="1"/>
</dbReference>
<dbReference type="Pfam" id="PF01562">
    <property type="entry name" value="Pep_M12B_propep"/>
    <property type="match status" value="1"/>
</dbReference>
<dbReference type="Pfam" id="PF01421">
    <property type="entry name" value="Reprolysin"/>
    <property type="match status" value="1"/>
</dbReference>
<dbReference type="PRINTS" id="PR00289">
    <property type="entry name" value="DISINTEGRIN"/>
</dbReference>
<dbReference type="SMART" id="SM00608">
    <property type="entry name" value="ACR"/>
    <property type="match status" value="1"/>
</dbReference>
<dbReference type="SMART" id="SM00050">
    <property type="entry name" value="DISIN"/>
    <property type="match status" value="1"/>
</dbReference>
<dbReference type="SUPFAM" id="SSF57552">
    <property type="entry name" value="Blood coagulation inhibitor (disintegrin)"/>
    <property type="match status" value="1"/>
</dbReference>
<dbReference type="SUPFAM" id="SSF55486">
    <property type="entry name" value="Metalloproteases ('zincins'), catalytic domain"/>
    <property type="match status" value="1"/>
</dbReference>
<dbReference type="PROSITE" id="PS50215">
    <property type="entry name" value="ADAM_MEPRO"/>
    <property type="match status" value="1"/>
</dbReference>
<dbReference type="PROSITE" id="PS00427">
    <property type="entry name" value="DISINTEGRIN_1"/>
    <property type="match status" value="1"/>
</dbReference>
<dbReference type="PROSITE" id="PS50214">
    <property type="entry name" value="DISINTEGRIN_2"/>
    <property type="match status" value="1"/>
</dbReference>
<dbReference type="PROSITE" id="PS00022">
    <property type="entry name" value="EGF_1"/>
    <property type="match status" value="1"/>
</dbReference>
<dbReference type="PROSITE" id="PS50026">
    <property type="entry name" value="EGF_3"/>
    <property type="match status" value="1"/>
</dbReference>
<feature type="signal peptide" evidence="3">
    <location>
        <begin position="1"/>
        <end position="23"/>
    </location>
</feature>
<feature type="propeptide" id="PRO_0000029114" evidence="1">
    <location>
        <begin position="24"/>
        <end position="223"/>
    </location>
</feature>
<feature type="chain" id="PRO_0000029115" description="Disintegrin and metalloproteinase domain-containing protein 22">
    <location>
        <begin position="224"/>
        <end position="904"/>
    </location>
</feature>
<feature type="topological domain" description="Extracellular" evidence="3">
    <location>
        <begin position="24"/>
        <end position="734"/>
    </location>
</feature>
<feature type="transmembrane region" description="Helical" evidence="3">
    <location>
        <begin position="735"/>
        <end position="755"/>
    </location>
</feature>
<feature type="topological domain" description="Cytoplasmic" evidence="3">
    <location>
        <begin position="756"/>
        <end position="857"/>
    </location>
</feature>
<feature type="domain" description="Peptidase M12B" evidence="6">
    <location>
        <begin position="237"/>
        <end position="436"/>
    </location>
</feature>
<feature type="domain" description="Disintegrin" evidence="4">
    <location>
        <begin position="442"/>
        <end position="529"/>
    </location>
</feature>
<feature type="domain" description="EGF-like" evidence="5">
    <location>
        <begin position="673"/>
        <end position="710"/>
    </location>
</feature>
<feature type="region of interest" description="Disordered" evidence="7">
    <location>
        <begin position="769"/>
        <end position="904"/>
    </location>
</feature>
<feature type="compositionally biased region" description="Low complexity" evidence="7">
    <location>
        <begin position="789"/>
        <end position="808"/>
    </location>
</feature>
<feature type="compositionally biased region" description="Basic and acidic residues" evidence="7">
    <location>
        <begin position="809"/>
        <end position="827"/>
    </location>
</feature>
<feature type="compositionally biased region" description="Basic residues" evidence="7">
    <location>
        <begin position="840"/>
        <end position="851"/>
    </location>
</feature>
<feature type="compositionally biased region" description="Low complexity" evidence="7">
    <location>
        <begin position="860"/>
        <end position="875"/>
    </location>
</feature>
<feature type="modified residue" description="Phosphoserine" evidence="17">
    <location>
        <position position="808"/>
    </location>
</feature>
<feature type="modified residue" description="Phosphoserine" evidence="17">
    <location>
        <position position="832"/>
    </location>
</feature>
<feature type="modified residue" description="Phosphoserine" evidence="17">
    <location>
        <position position="855"/>
    </location>
</feature>
<feature type="modified residue" description="Phosphoserine" evidence="17">
    <location>
        <position position="860"/>
    </location>
</feature>
<feature type="modified residue" description="Phosphoserine" evidence="17">
    <location>
        <position position="864"/>
    </location>
</feature>
<feature type="modified residue" description="Phosphoserine" evidence="17">
    <location>
        <position position="868"/>
    </location>
</feature>
<feature type="glycosylation site" description="N-linked (GlcNAc...) asparagine" evidence="3">
    <location>
        <position position="163"/>
    </location>
</feature>
<feature type="glycosylation site" description="N-linked (GlcNAc...) asparagine" evidence="3">
    <location>
        <position position="517"/>
    </location>
</feature>
<feature type="glycosylation site" description="N-linked (GlcNAc...) asparagine" evidence="3">
    <location>
        <position position="632"/>
    </location>
</feature>
<feature type="glycosylation site" description="N-linked (GlcNAc...) asparagine" evidence="3">
    <location>
        <position position="673"/>
    </location>
</feature>
<feature type="disulfide bond" evidence="1">
    <location>
        <begin position="347"/>
        <end position="431"/>
    </location>
</feature>
<feature type="disulfide bond" evidence="1">
    <location>
        <begin position="390"/>
        <end position="415"/>
    </location>
</feature>
<feature type="disulfide bond" evidence="1">
    <location>
        <begin position="392"/>
        <end position="399"/>
    </location>
</feature>
<feature type="disulfide bond" evidence="1">
    <location>
        <begin position="445"/>
        <end position="475"/>
    </location>
</feature>
<feature type="disulfide bond" evidence="1">
    <location>
        <begin position="456"/>
        <end position="472"/>
    </location>
</feature>
<feature type="disulfide bond" evidence="1">
    <location>
        <begin position="458"/>
        <end position="464"/>
    </location>
</feature>
<feature type="disulfide bond" evidence="1">
    <location>
        <begin position="471"/>
        <end position="492"/>
    </location>
</feature>
<feature type="disulfide bond" evidence="1">
    <location>
        <begin position="483"/>
        <end position="489"/>
    </location>
</feature>
<feature type="disulfide bond" evidence="1">
    <location>
        <begin position="488"/>
        <end position="514"/>
    </location>
</feature>
<feature type="disulfide bond" evidence="1">
    <location>
        <begin position="501"/>
        <end position="521"/>
    </location>
</feature>
<feature type="disulfide bond" evidence="1">
    <location>
        <begin position="508"/>
        <end position="540"/>
    </location>
</feature>
<feature type="disulfide bond" evidence="1">
    <location>
        <begin position="533"/>
        <end position="545"/>
    </location>
</feature>
<feature type="disulfide bond" evidence="1">
    <location>
        <begin position="552"/>
        <end position="603"/>
    </location>
</feature>
<feature type="disulfide bond" evidence="1">
    <location>
        <begin position="567"/>
        <end position="633"/>
    </location>
</feature>
<feature type="disulfide bond" evidence="1">
    <location>
        <begin position="581"/>
        <end position="591"/>
    </location>
</feature>
<feature type="disulfide bond" evidence="1">
    <location>
        <begin position="598"/>
        <end position="661"/>
    </location>
</feature>
<feature type="disulfide bond" evidence="1">
    <location>
        <begin position="655"/>
        <end position="666"/>
    </location>
</feature>
<feature type="disulfide bond" evidence="1">
    <location>
        <begin position="677"/>
        <end position="692"/>
    </location>
</feature>
<feature type="disulfide bond" evidence="1">
    <location>
        <begin position="686"/>
        <end position="698"/>
    </location>
</feature>
<feature type="disulfide bond" evidence="1">
    <location>
        <begin position="700"/>
        <end position="709"/>
    </location>
</feature>
<feature type="splice variant" id="VSP_018233" description="In isoform 16." evidence="14">
    <original>VAGTNIIIGIIAGTILVLALILGITAWGYKNYREQRQLPQGDYVKKPGDGDSFYSDFPPGGSTNSASSSKKRSNGLSHSWSERIPDTKHISDICENGRPRSNSWQGNMGGNKKKIRGKRFRPRSNSTETLSPAKSPSSSTGSIASSRKYPYPMPPLPDEGKTAGRQSARLWETSI</original>
    <variation>QMDSLILGVKGFQTQNIFQTSVKMGDLAVTPGKVTWEATKRKSEGKDLDLDLTQLRPCHLPSLLLHQLGLLPPAENTRTLCLRFQTRGRQRADRAPGYGRHPF</variation>
    <location>
        <begin position="730"/>
        <end position="904"/>
    </location>
</feature>
<feature type="splice variant" id="VSP_018234" description="In isoform 14." evidence="14">
    <original>NYREQRQLPQGDYVKKPGDGDSFYSDFPPGGSTNSASSSKKRSNGLSHSWSERIPDTKHISDICENGRPRSNSWQGNMGGNKKKIRGKRFRPRSNSTETLSPAKSPSSSTGSIASSRKYPYPMPPLPDEGKTAGRQSARLWETSI</original>
    <variation>FPPVPSHIIPLVRTFHYFAAGQMDSLILGVKGFQTQNIFQTSVKMGDLAVTPGKVTWEATKRKSEGKDLDLDLTQLRPCHLPSLLLHQLGLLPPAENTRTLCLRFQTRGRQRADRAPGYGRHPF</variation>
    <location>
        <begin position="760"/>
        <end position="904"/>
    </location>
</feature>
<feature type="splice variant" id="VSP_018235" description="In isoform 3, isoform 4 and isoform 18." evidence="14">
    <location>
        <begin position="760"/>
        <end position="801"/>
    </location>
</feature>
<feature type="splice variant" id="VSP_018236" description="In isoform 11 and isoform 19." evidence="14">
    <location>
        <begin position="760"/>
        <end position="765"/>
    </location>
</feature>
<feature type="splice variant" id="VSP_018237" description="In isoform 21." evidence="14">
    <original>QLPQGDYVKKPGDGDSFYSDFPPGGSTNSASSSKKRSNGLSHSWSERIPDTKHISDICENGRPRSNSWQGNMGGNKKKIRG</original>
    <variation>FPPVPSHIIPLVRTFHYFAAGQMDSLILGVKGFQTQNIFQTSVKMGDLAVTPGKVTWEATKRKSEGKDLDLDLTQLSKLYL</variation>
    <location>
        <begin position="766"/>
        <end position="846"/>
    </location>
</feature>
<feature type="splice variant" id="VSP_018238" description="In isoform 2, isoform 5, isoform 8, isoform 15 and isoform 17." evidence="13 14 15">
    <location>
        <begin position="766"/>
        <end position="801"/>
    </location>
</feature>
<feature type="splice variant" id="VSP_018239" description="In isoform 10, isoform 11, isoform 12 and isoform 13." evidence="14">
    <original>S</original>
    <variation>SAFLSHFQISTCSITHYSISQNISLFCSRS</variation>
    <location>
        <position position="802"/>
    </location>
</feature>
<feature type="splice variant" id="VSP_018240" description="In isoform 21." evidence="14">
    <location>
        <begin position="847"/>
        <end position="904"/>
    </location>
</feature>
<feature type="splice variant" id="VSP_018241" description="In isoform 7." evidence="14">
    <original>ETLSPAKSPSSSTGSIASSRKYPYPMPPLPDEGKTAGRQSARLWETSI</original>
    <variation>DLGIIT</variation>
    <location>
        <begin position="857"/>
        <end position="904"/>
    </location>
</feature>
<feature type="splice variant" id="VSP_018242" description="In isoform 10." evidence="14">
    <original>E</original>
    <variation>EREPQAPEPGHSLAQTIPSQGISPGGSDSPQTGSLDHSSQDGPHQQDR</variation>
    <location>
        <position position="857"/>
    </location>
</feature>
<feature type="splice variant" id="VSP_018243" description="In isoform 12." evidence="14">
    <original>E</original>
    <variation>EYLNPWFKRDYNVAKWVEDVNKNTEGPYFR</variation>
    <location>
        <position position="857"/>
    </location>
</feature>
<feature type="splice variant" id="VSP_018244" description="In isoform 15." evidence="14">
    <original>E</original>
    <variation>DSQDGPHQQDR</variation>
    <location>
        <position position="857"/>
    </location>
</feature>
<feature type="splice variant" id="VSP_018245" description="In isoform 4, isoform 5 and isoform 6." evidence="14">
    <original>E</original>
    <variation>EREPQAPEPGHSLAQTIPSQGISPGGSDSPQTGSLDHR</variation>
    <location>
        <position position="857"/>
    </location>
</feature>
<feature type="splice variant" id="VSP_018246" description="In isoform 8." evidence="14">
    <original>E</original>
    <variation>EYLNPWFKRDYNVAKWVEDVNKNTEGPYFSSQDSPHQQDR</variation>
    <location>
        <position position="857"/>
    </location>
</feature>
<feature type="splice variant" id="VSP_018247" description="In isoform 9." evidence="14">
    <original>E</original>
    <variation>EREPQAPEPGHSLAQTIPSQGISPGGSDSPQTGSLDHRYLNPWFKRDYNVAKWVEDVNKNTEGPYFR</variation>
    <location>
        <position position="857"/>
    </location>
</feature>
<feature type="splice variant" id="VSP_018248" description="In isoform 17, isoform 18, isoform 19 and isoform 20." evidence="13 14">
    <location>
        <begin position="858"/>
        <end position="904"/>
    </location>
</feature>
<feature type="mutagenesis site" description="Fails to bind to LGI1." evidence="9">
    <original>D</original>
    <variation>N</variation>
    <location>
        <position position="509"/>
    </location>
</feature>
<feature type="sequence conflict" description="In Ref. 2; BAC28742." evidence="16" ref="2">
    <original>K</original>
    <variation>R</variation>
    <location>
        <position position="639"/>
    </location>
</feature>
<feature type="modified residue" description="Phosphoserine" evidence="17">
    <location sequence="Q9R1V6-10">
        <position position="817"/>
    </location>
</feature>
<feature type="modified residue" description="Phosphoserine" evidence="17">
    <location sequence="Q9R1V6-14">
        <position position="882"/>
    </location>
</feature>
<gene>
    <name type="primary">Adam22</name>
</gene>
<sequence>MQAAAAASFWLLCVLGTCPLARCGRAGVASLKGLERGKENRFLERQSIIPLRLIYRLGGEDETQHNQLDTRVRGDPGGPQLTHVDKASFRVDAFGTSFVLDVLLNHELLSSGYVERQIEHGGKVVENKGGEHCYYQGQIRGNPVSFVALSTCHGLHGMFYDGNHTYLIEPEENEKSQESSHCHSVYKSRQFEFPLDDLPSEFQRVNITPPQFILKPRLKRRKRQLLRFPRNVEEETKYIELMIVNDHLMFKKHRLSVVYTNTYAKSVVNMADVIYKDQLKTRIVLVAMETWAADNKFAISENPLITLREFMKYRRDFIKEKADAVHLFSGSQFESSRSGAAYIGGICSLLRGGGVNEFGKTDLMAVTLAQSLAHNVGIISDKRKLASGECKCEDTWSGCIMGDTGYYLPKKFTQCNVEEYHDFLNSGGGACLFNKPSKLLDPPECGNGFIETGEECDCGTPAECALEGAECCKKCTLTQDSQCSDGLCCKKCKFQPLGTVCREAVNDCDIREICSGNSSQCAPNVHKMDGYSCDGTQGICFGGRCKTRDRQCKYIWGQKVTASDRYCYEKLNIEGTEKGNCGKDKDTWTQCNKRDVLCGYLLCTNIGNIPRLGELDGEITSTLVVQQGRTLNCSGAHVKLEEDVDLGYVEDGTPCGPQMMCLEHRCLPVASFNFSTCSSSKAGTVCSGNGVCSNELKCVCNRHWTGADCGTHFPHNDDAKTGITLSGNGVAGTNIIIGIIAGTILVLALILGITAWGYKNYREQRQLPQGDYVKKPGDGDSFYSDFPPGGSTNSASSSKKRSNGLSHSWSERIPDTKHISDICENGRPRSNSWQGNMGGNKKKIRGKRFRPRSNSTETLSPAKSPSSSTGSIASSRKYPYPMPPLPDEGKTAGRQSARLWETSI</sequence>